<name>COFH_METMJ</name>
<dbReference type="EC" id="2.5.1.147" evidence="1"/>
<dbReference type="EMBL" id="CP000562">
    <property type="protein sequence ID" value="ABN55983.1"/>
    <property type="molecule type" value="Genomic_DNA"/>
</dbReference>
<dbReference type="RefSeq" id="WP_011842904.1">
    <property type="nucleotide sequence ID" value="NC_009051.1"/>
</dbReference>
<dbReference type="SMR" id="A3CRI3"/>
<dbReference type="STRING" id="368407.Memar_0048"/>
<dbReference type="GeneID" id="4846600"/>
<dbReference type="GeneID" id="76730632"/>
<dbReference type="KEGG" id="mem:Memar_0048"/>
<dbReference type="eggNOG" id="arCOG00656">
    <property type="taxonomic scope" value="Archaea"/>
</dbReference>
<dbReference type="HOGENOM" id="CLU_040406_1_1_2"/>
<dbReference type="OrthoDB" id="8186at2157"/>
<dbReference type="UniPathway" id="UPA00072"/>
<dbReference type="Proteomes" id="UP000002146">
    <property type="component" value="Chromosome"/>
</dbReference>
<dbReference type="GO" id="GO:0051539">
    <property type="term" value="F:4 iron, 4 sulfur cluster binding"/>
    <property type="evidence" value="ECO:0007669"/>
    <property type="project" value="UniProtKB-KW"/>
</dbReference>
<dbReference type="GO" id="GO:0141093">
    <property type="term" value="F:5-amino-6-(D-ribitylamino)uracil--L-tyrosine 4-hydroxyphenyl transferase activity"/>
    <property type="evidence" value="ECO:0007669"/>
    <property type="project" value="UniProtKB-EC"/>
</dbReference>
<dbReference type="GO" id="GO:0044689">
    <property type="term" value="F:7,8-didemethyl-8-hydroxy-5-deazariboflavin synthase activity"/>
    <property type="evidence" value="ECO:0007669"/>
    <property type="project" value="TreeGrafter"/>
</dbReference>
<dbReference type="GO" id="GO:0005506">
    <property type="term" value="F:iron ion binding"/>
    <property type="evidence" value="ECO:0007669"/>
    <property type="project" value="UniProtKB-UniRule"/>
</dbReference>
<dbReference type="CDD" id="cd01335">
    <property type="entry name" value="Radical_SAM"/>
    <property type="match status" value="1"/>
</dbReference>
<dbReference type="Gene3D" id="3.20.20.70">
    <property type="entry name" value="Aldolase class I"/>
    <property type="match status" value="1"/>
</dbReference>
<dbReference type="HAMAP" id="MF_01612">
    <property type="entry name" value="FO_synth_sub2"/>
    <property type="match status" value="1"/>
</dbReference>
<dbReference type="InterPro" id="IPR013785">
    <property type="entry name" value="Aldolase_TIM"/>
</dbReference>
<dbReference type="InterPro" id="IPR045567">
    <property type="entry name" value="CofH/MnqC-like_C"/>
</dbReference>
<dbReference type="InterPro" id="IPR019940">
    <property type="entry name" value="CofH_family"/>
</dbReference>
<dbReference type="InterPro" id="IPR034405">
    <property type="entry name" value="F420"/>
</dbReference>
<dbReference type="InterPro" id="IPR020050">
    <property type="entry name" value="FO_synthase_su2"/>
</dbReference>
<dbReference type="InterPro" id="IPR007197">
    <property type="entry name" value="rSAM"/>
</dbReference>
<dbReference type="NCBIfam" id="TIGR00423">
    <property type="entry name" value="CofH family radical SAM protein"/>
    <property type="match status" value="1"/>
</dbReference>
<dbReference type="NCBIfam" id="TIGR03551">
    <property type="entry name" value="F420_cofH"/>
    <property type="match status" value="1"/>
</dbReference>
<dbReference type="NCBIfam" id="NF005609">
    <property type="entry name" value="PRK07360.1"/>
    <property type="match status" value="1"/>
</dbReference>
<dbReference type="PANTHER" id="PTHR43076">
    <property type="entry name" value="FO SYNTHASE (COFH)"/>
    <property type="match status" value="1"/>
</dbReference>
<dbReference type="PANTHER" id="PTHR43076:SF1">
    <property type="entry name" value="LIPOYL SYNTHASE 2"/>
    <property type="match status" value="1"/>
</dbReference>
<dbReference type="Pfam" id="PF19288">
    <property type="entry name" value="CofH_C"/>
    <property type="match status" value="1"/>
</dbReference>
<dbReference type="Pfam" id="PF04055">
    <property type="entry name" value="Radical_SAM"/>
    <property type="match status" value="1"/>
</dbReference>
<dbReference type="PIRSF" id="PIRSF004762">
    <property type="entry name" value="CHP00423"/>
    <property type="match status" value="1"/>
</dbReference>
<dbReference type="SFLD" id="SFLDF00293">
    <property type="entry name" value="((2_3_4_5-tetrahydroxypentyl)a"/>
    <property type="match status" value="1"/>
</dbReference>
<dbReference type="SFLD" id="SFLDF00343">
    <property type="entry name" value="aminofutalosine_synthase_(mqnE"/>
    <property type="match status" value="1"/>
</dbReference>
<dbReference type="SFLD" id="SFLDG01064">
    <property type="entry name" value="F420__menaquinone_cofactor_bio"/>
    <property type="match status" value="2"/>
</dbReference>
<dbReference type="SUPFAM" id="SSF102114">
    <property type="entry name" value="Radical SAM enzymes"/>
    <property type="match status" value="1"/>
</dbReference>
<dbReference type="PROSITE" id="PS51918">
    <property type="entry name" value="RADICAL_SAM"/>
    <property type="match status" value="1"/>
</dbReference>
<proteinExistence type="inferred from homology"/>
<reference key="1">
    <citation type="journal article" date="2009" name="Stand. Genomic Sci.">
        <title>Complete genome sequence of Methanoculleus marisnigri Romesser et al. 1981 type strain JR1.</title>
        <authorList>
            <person name="Anderson I.J."/>
            <person name="Sieprawska-Lupa M."/>
            <person name="Lapidus A."/>
            <person name="Nolan M."/>
            <person name="Copeland A."/>
            <person name="Glavina Del Rio T."/>
            <person name="Tice H."/>
            <person name="Dalin E."/>
            <person name="Barry K."/>
            <person name="Saunders E."/>
            <person name="Han C."/>
            <person name="Brettin T."/>
            <person name="Detter J.C."/>
            <person name="Bruce D."/>
            <person name="Mikhailova N."/>
            <person name="Pitluck S."/>
            <person name="Hauser L."/>
            <person name="Land M."/>
            <person name="Lucas S."/>
            <person name="Richardson P."/>
            <person name="Whitman W.B."/>
            <person name="Kyrpides N.C."/>
        </authorList>
    </citation>
    <scope>NUCLEOTIDE SEQUENCE [LARGE SCALE GENOMIC DNA]</scope>
    <source>
        <strain>ATCC 35101 / DSM 1498 / JR1</strain>
    </source>
</reference>
<gene>
    <name evidence="1" type="primary">cofH</name>
    <name type="ordered locus">Memar_0048</name>
</gene>
<protein>
    <recommendedName>
        <fullName evidence="1">5-amino-6-(D-ribitylamino)uracil--L-tyrosine 4-hydroxyphenyl transferase</fullName>
        <ecNumber evidence="1">2.5.1.147</ecNumber>
    </recommendedName>
    <alternativeName>
        <fullName evidence="1">FO synthase subunit 2</fullName>
    </alternativeName>
</protein>
<feature type="chain" id="PRO_1000215709" description="5-amino-6-(D-ribitylamino)uracil--L-tyrosine 4-hydroxyphenyl transferase">
    <location>
        <begin position="1"/>
        <end position="367"/>
    </location>
</feature>
<feature type="domain" description="Radical SAM core" evidence="2">
    <location>
        <begin position="56"/>
        <end position="290"/>
    </location>
</feature>
<feature type="binding site" evidence="1">
    <location>
        <position position="70"/>
    </location>
    <ligand>
        <name>[4Fe-4S] cluster</name>
        <dbReference type="ChEBI" id="CHEBI:49883"/>
        <note>4Fe-4S-S-AdoMet</note>
    </ligand>
</feature>
<feature type="binding site" evidence="1">
    <location>
        <position position="74"/>
    </location>
    <ligand>
        <name>[4Fe-4S] cluster</name>
        <dbReference type="ChEBI" id="CHEBI:49883"/>
        <note>4Fe-4S-S-AdoMet</note>
    </ligand>
</feature>
<feature type="binding site" evidence="1">
    <location>
        <position position="77"/>
    </location>
    <ligand>
        <name>[4Fe-4S] cluster</name>
        <dbReference type="ChEBI" id="CHEBI:49883"/>
        <note>4Fe-4S-S-AdoMet</note>
    </ligand>
</feature>
<comment type="function">
    <text evidence="1">Catalyzes the radical-mediated synthesis of 5-amino-5-(4-hydroxybenzyl)-6-(D-ribitylimino)-5,6-dihydrouracil from 5-amino-6-(D-ribitylamino)uracil and L-tyrosine.</text>
</comment>
<comment type="catalytic activity">
    <reaction evidence="1">
        <text>5-amino-6-(D-ribitylamino)uracil + L-tyrosine + S-adenosyl-L-methionine = 5-amino-5-(4-hydroxybenzyl)-6-(D-ribitylimino)-5,6-dihydrouracil + 2-iminoacetate + 5'-deoxyadenosine + L-methionine + H(+)</text>
        <dbReference type="Rhea" id="RHEA:55200"/>
        <dbReference type="ChEBI" id="CHEBI:15378"/>
        <dbReference type="ChEBI" id="CHEBI:15934"/>
        <dbReference type="ChEBI" id="CHEBI:17319"/>
        <dbReference type="ChEBI" id="CHEBI:57844"/>
        <dbReference type="ChEBI" id="CHEBI:58315"/>
        <dbReference type="ChEBI" id="CHEBI:59789"/>
        <dbReference type="ChEBI" id="CHEBI:77846"/>
        <dbReference type="ChEBI" id="CHEBI:85936"/>
        <dbReference type="EC" id="2.5.1.147"/>
    </reaction>
</comment>
<comment type="cofactor">
    <cofactor evidence="1">
        <name>[4Fe-4S] cluster</name>
        <dbReference type="ChEBI" id="CHEBI:49883"/>
    </cofactor>
    <text evidence="1">Binds 1 [4Fe-4S] cluster. The cluster is coordinated with 3 cysteines and an exchangeable S-adenosyl-L-methionine.</text>
</comment>
<comment type="pathway">
    <text evidence="1">Cofactor biosynthesis; coenzyme F0 biosynthesis.</text>
</comment>
<comment type="subunit">
    <text evidence="1">Consists of two subunits, CofG and CofH.</text>
</comment>
<comment type="similarity">
    <text evidence="1">Belongs to the radical SAM superfamily. CofH family.</text>
</comment>
<accession>A3CRI3</accession>
<evidence type="ECO:0000255" key="1">
    <source>
        <dbReference type="HAMAP-Rule" id="MF_01612"/>
    </source>
</evidence>
<evidence type="ECO:0000255" key="2">
    <source>
        <dbReference type="PROSITE-ProRule" id="PRU01266"/>
    </source>
</evidence>
<organism>
    <name type="scientific">Methanoculleus marisnigri (strain ATCC 35101 / DSM 1498 / JR1)</name>
    <dbReference type="NCBI Taxonomy" id="368407"/>
    <lineage>
        <taxon>Archaea</taxon>
        <taxon>Methanobacteriati</taxon>
        <taxon>Methanobacteriota</taxon>
        <taxon>Stenosarchaea group</taxon>
        <taxon>Methanomicrobia</taxon>
        <taxon>Methanomicrobiales</taxon>
        <taxon>Methanomicrobiaceae</taxon>
        <taxon>Methanoculleus</taxon>
    </lineage>
</organism>
<keyword id="KW-0004">4Fe-4S</keyword>
<keyword id="KW-0408">Iron</keyword>
<keyword id="KW-0411">Iron-sulfur</keyword>
<keyword id="KW-0479">Metal-binding</keyword>
<keyword id="KW-0949">S-adenosyl-L-methionine</keyword>
<keyword id="KW-0808">Transferase</keyword>
<sequence>MKCMPPPLREILDDVLAGHRLTEEEAVRLLATRDRGVWEIAAAANELRERKVGNVVTYVRNQNINVTNLCVNACGFCGFSRKPGDADAFFYGETAVRGKAREARERGVTEVCTVSGLHPEFDVQSYAEIYSWIRDEVPGVHIHASNPMEVAYAARRSGISTREVMELMRGAGLSTLCGTAAEILVDDVRRVICPDKIDTGSWARIIREAHGLGIRSTATIMYGHCESEADRARHLNILREIQDETHGFTEFVPLSFIHKNTPLYRAGLARAGATGREDLLMFAVARLFLDNFDHIQASWVKVGTKMAEMALLSGADDLGGTLFEESISREAGARDTDYLDPAEMRRMAEDLGRVLRQRTTTYALLPG</sequence>